<keyword id="KW-0687">Ribonucleoprotein</keyword>
<keyword id="KW-0689">Ribosomal protein</keyword>
<dbReference type="EMBL" id="CP000124">
    <property type="protein sequence ID" value="ABA48346.1"/>
    <property type="molecule type" value="Genomic_DNA"/>
</dbReference>
<dbReference type="RefSeq" id="WP_004194309.1">
    <property type="nucleotide sequence ID" value="NC_007434.1"/>
</dbReference>
<dbReference type="SMR" id="Q3JNR2"/>
<dbReference type="EnsemblBacteria" id="ABA48346">
    <property type="protein sequence ID" value="ABA48346"/>
    <property type="gene ID" value="BURPS1710b_3420"/>
</dbReference>
<dbReference type="GeneID" id="93061506"/>
<dbReference type="KEGG" id="bpm:BURPS1710b_3420"/>
<dbReference type="HOGENOM" id="CLU_046483_2_1_4"/>
<dbReference type="Proteomes" id="UP000002700">
    <property type="component" value="Chromosome I"/>
</dbReference>
<dbReference type="GO" id="GO:0022627">
    <property type="term" value="C:cytosolic small ribosomal subunit"/>
    <property type="evidence" value="ECO:0007669"/>
    <property type="project" value="TreeGrafter"/>
</dbReference>
<dbReference type="GO" id="GO:0003723">
    <property type="term" value="F:RNA binding"/>
    <property type="evidence" value="ECO:0007669"/>
    <property type="project" value="TreeGrafter"/>
</dbReference>
<dbReference type="GO" id="GO:0003735">
    <property type="term" value="F:structural constituent of ribosome"/>
    <property type="evidence" value="ECO:0007669"/>
    <property type="project" value="InterPro"/>
</dbReference>
<dbReference type="GO" id="GO:0006412">
    <property type="term" value="P:translation"/>
    <property type="evidence" value="ECO:0007669"/>
    <property type="project" value="UniProtKB-UniRule"/>
</dbReference>
<dbReference type="FunFam" id="3.30.230.10:FF:000001">
    <property type="entry name" value="30S ribosomal protein S9"/>
    <property type="match status" value="1"/>
</dbReference>
<dbReference type="Gene3D" id="3.30.230.10">
    <property type="match status" value="1"/>
</dbReference>
<dbReference type="HAMAP" id="MF_00532_B">
    <property type="entry name" value="Ribosomal_uS9_B"/>
    <property type="match status" value="1"/>
</dbReference>
<dbReference type="InterPro" id="IPR020568">
    <property type="entry name" value="Ribosomal_Su5_D2-typ_SF"/>
</dbReference>
<dbReference type="InterPro" id="IPR000754">
    <property type="entry name" value="Ribosomal_uS9"/>
</dbReference>
<dbReference type="InterPro" id="IPR023035">
    <property type="entry name" value="Ribosomal_uS9_bac/plastid"/>
</dbReference>
<dbReference type="InterPro" id="IPR020574">
    <property type="entry name" value="Ribosomal_uS9_CS"/>
</dbReference>
<dbReference type="InterPro" id="IPR014721">
    <property type="entry name" value="Ribsml_uS5_D2-typ_fold_subgr"/>
</dbReference>
<dbReference type="NCBIfam" id="NF001099">
    <property type="entry name" value="PRK00132.1"/>
    <property type="match status" value="1"/>
</dbReference>
<dbReference type="PANTHER" id="PTHR21569">
    <property type="entry name" value="RIBOSOMAL PROTEIN S9"/>
    <property type="match status" value="1"/>
</dbReference>
<dbReference type="PANTHER" id="PTHR21569:SF1">
    <property type="entry name" value="SMALL RIBOSOMAL SUBUNIT PROTEIN US9M"/>
    <property type="match status" value="1"/>
</dbReference>
<dbReference type="Pfam" id="PF00380">
    <property type="entry name" value="Ribosomal_S9"/>
    <property type="match status" value="1"/>
</dbReference>
<dbReference type="SUPFAM" id="SSF54211">
    <property type="entry name" value="Ribosomal protein S5 domain 2-like"/>
    <property type="match status" value="1"/>
</dbReference>
<dbReference type="PROSITE" id="PS00360">
    <property type="entry name" value="RIBOSOMAL_S9"/>
    <property type="match status" value="1"/>
</dbReference>
<reference key="1">
    <citation type="journal article" date="2010" name="Genome Biol. Evol.">
        <title>Continuing evolution of Burkholderia mallei through genome reduction and large-scale rearrangements.</title>
        <authorList>
            <person name="Losada L."/>
            <person name="Ronning C.M."/>
            <person name="DeShazer D."/>
            <person name="Woods D."/>
            <person name="Fedorova N."/>
            <person name="Kim H.S."/>
            <person name="Shabalina S.A."/>
            <person name="Pearson T.R."/>
            <person name="Brinkac L."/>
            <person name="Tan P."/>
            <person name="Nandi T."/>
            <person name="Crabtree J."/>
            <person name="Badger J."/>
            <person name="Beckstrom-Sternberg S."/>
            <person name="Saqib M."/>
            <person name="Schutzer S.E."/>
            <person name="Keim P."/>
            <person name="Nierman W.C."/>
        </authorList>
    </citation>
    <scope>NUCLEOTIDE SEQUENCE [LARGE SCALE GENOMIC DNA]</scope>
    <source>
        <strain>1710b</strain>
    </source>
</reference>
<gene>
    <name evidence="1" type="primary">rpsI</name>
    <name type="ordered locus">BURPS1710b_3420</name>
</gene>
<protein>
    <recommendedName>
        <fullName evidence="1">Small ribosomal subunit protein uS9</fullName>
    </recommendedName>
    <alternativeName>
        <fullName evidence="2">30S ribosomal protein S9</fullName>
    </alternativeName>
</protein>
<organism>
    <name type="scientific">Burkholderia pseudomallei (strain 1710b)</name>
    <dbReference type="NCBI Taxonomy" id="320372"/>
    <lineage>
        <taxon>Bacteria</taxon>
        <taxon>Pseudomonadati</taxon>
        <taxon>Pseudomonadota</taxon>
        <taxon>Betaproteobacteria</taxon>
        <taxon>Burkholderiales</taxon>
        <taxon>Burkholderiaceae</taxon>
        <taxon>Burkholderia</taxon>
        <taxon>pseudomallei group</taxon>
    </lineage>
</organism>
<name>RS9_BURP1</name>
<feature type="chain" id="PRO_1000051188" description="Small ribosomal subunit protein uS9">
    <location>
        <begin position="1"/>
        <end position="130"/>
    </location>
</feature>
<evidence type="ECO:0000255" key="1">
    <source>
        <dbReference type="HAMAP-Rule" id="MF_00532"/>
    </source>
</evidence>
<evidence type="ECO:0000305" key="2"/>
<sequence>MIGNWNYGTGRRKSAVARVFIKAGKGDIVVNGKPISDYFSRETSLMIVRQPLELTNHAQTFDIKVNVSGGGETGQAGAVRHGITRALIDYDATLKPALSNAGFVTRDAREVERKKVGLHKARRAKQFSKR</sequence>
<proteinExistence type="inferred from homology"/>
<accession>Q3JNR2</accession>
<comment type="similarity">
    <text evidence="1">Belongs to the universal ribosomal protein uS9 family.</text>
</comment>